<name>IOLB_LACCA</name>
<feature type="chain" id="PRO_0000352389" description="5-deoxy-glucuronate isomerase">
    <location>
        <begin position="1"/>
        <end position="271"/>
    </location>
</feature>
<accession>A5YBJ4</accession>
<protein>
    <recommendedName>
        <fullName evidence="1">5-deoxy-glucuronate isomerase</fullName>
        <shortName evidence="1">5DG isomerase</shortName>
        <ecNumber evidence="1">5.3.1.30</ecNumber>
    </recommendedName>
</protein>
<evidence type="ECO:0000255" key="1">
    <source>
        <dbReference type="HAMAP-Rule" id="MF_01673"/>
    </source>
</evidence>
<organism>
    <name type="scientific">Lacticaseibacillus casei</name>
    <name type="common">Lactobacillus casei</name>
    <dbReference type="NCBI Taxonomy" id="1582"/>
    <lineage>
        <taxon>Bacteria</taxon>
        <taxon>Bacillati</taxon>
        <taxon>Bacillota</taxon>
        <taxon>Bacilli</taxon>
        <taxon>Lactobacillales</taxon>
        <taxon>Lactobacillaceae</taxon>
        <taxon>Lacticaseibacillus</taxon>
    </lineage>
</organism>
<reference key="1">
    <citation type="journal article" date="2007" name="Appl. Environ. Microbiol.">
        <title>Identification of a gene cluster allowing Lactobacillus casei BL23 the utilization of myo-inositol.</title>
        <authorList>
            <person name="Yebra M.J."/>
            <person name="Zuniga M."/>
            <person name="Beaufils S."/>
            <person name="Perez-Martinez G."/>
            <person name="Deutscher J."/>
            <person name="Monedero V."/>
        </authorList>
    </citation>
    <scope>NUCLEOTIDE SEQUENCE [GENOMIC DNA]</scope>
    <source>
        <strain>BL23</strain>
    </source>
</reference>
<sequence length="271" mass="30814">MSLLYHKQNQELSSGVRLIQDVNASNSPMKYTAVKVLEFSADSSYEETLEAFEAGIVVLEGKVTITADDQTFEDVGQRTSIFDKIPTDSVYVSTGLAFGIRAKQAAKILIAYAPTNQTFPVRLIRGNIHQVEHRGKYNNKRLVQNILPDNLPFADKLLLVEVYTDSANWSSYPPHRHDHDDLPAESLLEEIYYHEMRPKQGFVFQRVYTDDLSLDETMAVQNQDVVVVPKGYHPVGVPDGYDSYYLNVMAGPTRVWHFHNAPEHAWIIDRQ</sequence>
<keyword id="KW-0413">Isomerase</keyword>
<gene>
    <name evidence="1" type="primary">iolB</name>
</gene>
<proteinExistence type="inferred from homology"/>
<comment type="function">
    <text evidence="1">Involved in the isomerization of 5-deoxy-glucuronate (5DG) to 5-dehydro-2-deoxy-D-gluconate (DKG or 2-deoxy-5-keto-D-gluconate).</text>
</comment>
<comment type="catalytic activity">
    <reaction evidence="1">
        <text>5-deoxy-D-glucuronate = 5-dehydro-2-deoxy-D-gluconate</text>
        <dbReference type="Rhea" id="RHEA:25840"/>
        <dbReference type="ChEBI" id="CHEBI:16669"/>
        <dbReference type="ChEBI" id="CHEBI:58852"/>
        <dbReference type="EC" id="5.3.1.30"/>
    </reaction>
</comment>
<comment type="pathway">
    <text evidence="1">Polyol metabolism; myo-inositol degradation into acetyl-CoA; acetyl-CoA from myo-inositol: step 4/7.</text>
</comment>
<comment type="similarity">
    <text evidence="1">Belongs to the isomerase IolB family.</text>
</comment>
<dbReference type="EC" id="5.3.1.30" evidence="1"/>
<dbReference type="EMBL" id="EF382358">
    <property type="protein sequence ID" value="ABP57763.1"/>
    <property type="molecule type" value="Genomic_DNA"/>
</dbReference>
<dbReference type="SMR" id="A5YBJ4"/>
<dbReference type="STRING" id="1582.AAW28_06910"/>
<dbReference type="PATRIC" id="fig|1582.47.peg.194"/>
<dbReference type="eggNOG" id="COG3718">
    <property type="taxonomic scope" value="Bacteria"/>
</dbReference>
<dbReference type="OMA" id="HGYDLYY"/>
<dbReference type="UniPathway" id="UPA00076">
    <property type="reaction ID" value="UER00920"/>
</dbReference>
<dbReference type="GO" id="GO:0102482">
    <property type="term" value="F:5-deoxy-D-glucuronate isomerase activity"/>
    <property type="evidence" value="ECO:0007669"/>
    <property type="project" value="UniProtKB-EC"/>
</dbReference>
<dbReference type="GO" id="GO:0008880">
    <property type="term" value="F:glucuronate isomerase activity"/>
    <property type="evidence" value="ECO:0007669"/>
    <property type="project" value="InterPro"/>
</dbReference>
<dbReference type="GO" id="GO:0019310">
    <property type="term" value="P:inositol catabolic process"/>
    <property type="evidence" value="ECO:0007669"/>
    <property type="project" value="UniProtKB-UniRule"/>
</dbReference>
<dbReference type="Gene3D" id="2.60.120.10">
    <property type="entry name" value="Jelly Rolls"/>
    <property type="match status" value="2"/>
</dbReference>
<dbReference type="HAMAP" id="MF_01673">
    <property type="entry name" value="IolB"/>
    <property type="match status" value="1"/>
</dbReference>
<dbReference type="InterPro" id="IPR024203">
    <property type="entry name" value="Deoxy-glucuronate_isom_IolB"/>
</dbReference>
<dbReference type="InterPro" id="IPR023770">
    <property type="entry name" value="IolB_Bacilli"/>
</dbReference>
<dbReference type="InterPro" id="IPR021120">
    <property type="entry name" value="KduI/IolB_isomerase"/>
</dbReference>
<dbReference type="InterPro" id="IPR014710">
    <property type="entry name" value="RmlC-like_jellyroll"/>
</dbReference>
<dbReference type="InterPro" id="IPR011051">
    <property type="entry name" value="RmlC_Cupin_sf"/>
</dbReference>
<dbReference type="NCBIfam" id="TIGR04378">
    <property type="entry name" value="myo_inos_iolB"/>
    <property type="match status" value="1"/>
</dbReference>
<dbReference type="PANTHER" id="PTHR39193">
    <property type="entry name" value="5-DEOXY-GLUCURONATE ISOMERASE"/>
    <property type="match status" value="1"/>
</dbReference>
<dbReference type="PANTHER" id="PTHR39193:SF1">
    <property type="entry name" value="5-DEOXY-GLUCURONATE ISOMERASE"/>
    <property type="match status" value="1"/>
</dbReference>
<dbReference type="Pfam" id="PF04962">
    <property type="entry name" value="KduI"/>
    <property type="match status" value="1"/>
</dbReference>
<dbReference type="PIRSF" id="PIRSF036628">
    <property type="entry name" value="IolB"/>
    <property type="match status" value="1"/>
</dbReference>
<dbReference type="SUPFAM" id="SSF51182">
    <property type="entry name" value="RmlC-like cupins"/>
    <property type="match status" value="1"/>
</dbReference>